<organism>
    <name type="scientific">Listeria monocytogenes serotype 4b (strain CLIP80459)</name>
    <dbReference type="NCBI Taxonomy" id="568819"/>
    <lineage>
        <taxon>Bacteria</taxon>
        <taxon>Bacillati</taxon>
        <taxon>Bacillota</taxon>
        <taxon>Bacilli</taxon>
        <taxon>Bacillales</taxon>
        <taxon>Listeriaceae</taxon>
        <taxon>Listeria</taxon>
    </lineage>
</organism>
<accession>C1KX17</accession>
<feature type="chain" id="PRO_1000202976" description="Large-conductance mechanosensitive channel">
    <location>
        <begin position="1"/>
        <end position="128"/>
    </location>
</feature>
<feature type="transmembrane region" description="Helical" evidence="1">
    <location>
        <begin position="11"/>
        <end position="31"/>
    </location>
</feature>
<feature type="transmembrane region" description="Helical" evidence="1">
    <location>
        <begin position="70"/>
        <end position="90"/>
    </location>
</feature>
<proteinExistence type="inferred from homology"/>
<sequence length="128" mass="14225">MKKMLVEFRDFALKGNVLDLAVAVVIGAAFGKIVSSLVDNIIMPLVGVLLGGLDFTDLSFKVGKSVIQYGAFIQSIVDFVIIAFAIFIFVKVLTSFIKKKEQTVEETPVPPTEEYLKEIRDLLKEQQK</sequence>
<protein>
    <recommendedName>
        <fullName evidence="1">Large-conductance mechanosensitive channel</fullName>
    </recommendedName>
</protein>
<reference key="1">
    <citation type="journal article" date="2012" name="BMC Genomics">
        <title>Comparative genomics and transcriptomics of lineages I, II, and III strains of Listeria monocytogenes.</title>
        <authorList>
            <person name="Hain T."/>
            <person name="Ghai R."/>
            <person name="Billion A."/>
            <person name="Kuenne C.T."/>
            <person name="Steinweg C."/>
            <person name="Izar B."/>
            <person name="Mohamed W."/>
            <person name="Mraheil M."/>
            <person name="Domann E."/>
            <person name="Schaffrath S."/>
            <person name="Karst U."/>
            <person name="Goesmann A."/>
            <person name="Oehm S."/>
            <person name="Puhler A."/>
            <person name="Merkl R."/>
            <person name="Vorwerk S."/>
            <person name="Glaser P."/>
            <person name="Garrido P."/>
            <person name="Rusniok C."/>
            <person name="Buchrieser C."/>
            <person name="Goebel W."/>
            <person name="Chakraborty T."/>
        </authorList>
    </citation>
    <scope>NUCLEOTIDE SEQUENCE [LARGE SCALE GENOMIC DNA]</scope>
    <source>
        <strain>CLIP80459</strain>
    </source>
</reference>
<comment type="function">
    <text evidence="1">Channel that opens in response to stretch forces in the membrane lipid bilayer. May participate in the regulation of osmotic pressure changes within the cell.</text>
</comment>
<comment type="subunit">
    <text evidence="1">Homopentamer.</text>
</comment>
<comment type="subcellular location">
    <subcellularLocation>
        <location evidence="1">Cell membrane</location>
        <topology evidence="1">Multi-pass membrane protein</topology>
    </subcellularLocation>
</comment>
<comment type="similarity">
    <text evidence="1">Belongs to the MscL family.</text>
</comment>
<keyword id="KW-1003">Cell membrane</keyword>
<keyword id="KW-0407">Ion channel</keyword>
<keyword id="KW-0406">Ion transport</keyword>
<keyword id="KW-0472">Membrane</keyword>
<keyword id="KW-0812">Transmembrane</keyword>
<keyword id="KW-1133">Transmembrane helix</keyword>
<keyword id="KW-0813">Transport</keyword>
<dbReference type="EMBL" id="FM242711">
    <property type="protein sequence ID" value="CAS05844.1"/>
    <property type="molecule type" value="Genomic_DNA"/>
</dbReference>
<dbReference type="RefSeq" id="WP_003723947.1">
    <property type="nucleotide sequence ID" value="NC_012488.1"/>
</dbReference>
<dbReference type="SMR" id="C1KX17"/>
<dbReference type="KEGG" id="lmc:Lm4b_02085"/>
<dbReference type="HOGENOM" id="CLU_095787_0_0_9"/>
<dbReference type="GO" id="GO:0005886">
    <property type="term" value="C:plasma membrane"/>
    <property type="evidence" value="ECO:0007669"/>
    <property type="project" value="UniProtKB-SubCell"/>
</dbReference>
<dbReference type="GO" id="GO:0008381">
    <property type="term" value="F:mechanosensitive monoatomic ion channel activity"/>
    <property type="evidence" value="ECO:0007669"/>
    <property type="project" value="UniProtKB-UniRule"/>
</dbReference>
<dbReference type="FunFam" id="1.10.1200.120:FF:000003">
    <property type="entry name" value="Large-conductance mechanosensitive channel"/>
    <property type="match status" value="1"/>
</dbReference>
<dbReference type="Gene3D" id="1.10.1200.120">
    <property type="entry name" value="Large-conductance mechanosensitive channel, MscL, domain 1"/>
    <property type="match status" value="1"/>
</dbReference>
<dbReference type="HAMAP" id="MF_00115">
    <property type="entry name" value="MscL"/>
    <property type="match status" value="1"/>
</dbReference>
<dbReference type="InterPro" id="IPR019823">
    <property type="entry name" value="Mechanosensitive_channel_CS"/>
</dbReference>
<dbReference type="InterPro" id="IPR001185">
    <property type="entry name" value="MS_channel"/>
</dbReference>
<dbReference type="InterPro" id="IPR037673">
    <property type="entry name" value="MSC/AndL"/>
</dbReference>
<dbReference type="InterPro" id="IPR036019">
    <property type="entry name" value="MscL_channel"/>
</dbReference>
<dbReference type="NCBIfam" id="TIGR00220">
    <property type="entry name" value="mscL"/>
    <property type="match status" value="1"/>
</dbReference>
<dbReference type="NCBIfam" id="NF001843">
    <property type="entry name" value="PRK00567.1-4"/>
    <property type="match status" value="1"/>
</dbReference>
<dbReference type="NCBIfam" id="NF010558">
    <property type="entry name" value="PRK13953.1"/>
    <property type="match status" value="1"/>
</dbReference>
<dbReference type="PANTHER" id="PTHR30266:SF2">
    <property type="entry name" value="LARGE-CONDUCTANCE MECHANOSENSITIVE CHANNEL"/>
    <property type="match status" value="1"/>
</dbReference>
<dbReference type="PANTHER" id="PTHR30266">
    <property type="entry name" value="MECHANOSENSITIVE CHANNEL MSCL"/>
    <property type="match status" value="1"/>
</dbReference>
<dbReference type="Pfam" id="PF01741">
    <property type="entry name" value="MscL"/>
    <property type="match status" value="1"/>
</dbReference>
<dbReference type="PRINTS" id="PR01264">
    <property type="entry name" value="MECHCHANNEL"/>
</dbReference>
<dbReference type="SUPFAM" id="SSF81330">
    <property type="entry name" value="Gated mechanosensitive channel"/>
    <property type="match status" value="1"/>
</dbReference>
<dbReference type="PROSITE" id="PS01327">
    <property type="entry name" value="MSCL"/>
    <property type="match status" value="1"/>
</dbReference>
<gene>
    <name evidence="1" type="primary">mscL</name>
    <name type="ordered locus">Lm4b_02085</name>
</gene>
<name>MSCL_LISMC</name>
<evidence type="ECO:0000255" key="1">
    <source>
        <dbReference type="HAMAP-Rule" id="MF_00115"/>
    </source>
</evidence>